<accession>Q8RWZ5</accession>
<accession>O49361</accession>
<evidence type="ECO:0000250" key="1"/>
<evidence type="ECO:0000250" key="2">
    <source>
        <dbReference type="UniProtKB" id="Q9LPZ9"/>
    </source>
</evidence>
<evidence type="ECO:0000255" key="3"/>
<evidence type="ECO:0000255" key="4">
    <source>
        <dbReference type="PROSITE-ProRule" id="PRU00038"/>
    </source>
</evidence>
<evidence type="ECO:0000255" key="5">
    <source>
        <dbReference type="PROSITE-ProRule" id="PRU00159"/>
    </source>
</evidence>
<evidence type="ECO:0000255" key="6">
    <source>
        <dbReference type="PROSITE-ProRule" id="PRU10027"/>
    </source>
</evidence>
<evidence type="ECO:0000269" key="7">
    <source>
    </source>
</evidence>
<evidence type="ECO:0000305" key="8"/>
<organism>
    <name type="scientific">Arabidopsis thaliana</name>
    <name type="common">Mouse-ear cress</name>
    <dbReference type="NCBI Taxonomy" id="3702"/>
    <lineage>
        <taxon>Eukaryota</taxon>
        <taxon>Viridiplantae</taxon>
        <taxon>Streptophyta</taxon>
        <taxon>Embryophyta</taxon>
        <taxon>Tracheophyta</taxon>
        <taxon>Spermatophyta</taxon>
        <taxon>Magnoliopsida</taxon>
        <taxon>eudicotyledons</taxon>
        <taxon>Gunneridae</taxon>
        <taxon>Pentapetalae</taxon>
        <taxon>rosids</taxon>
        <taxon>malvids</taxon>
        <taxon>Brassicales</taxon>
        <taxon>Brassicaceae</taxon>
        <taxon>Camelineae</taxon>
        <taxon>Arabidopsis</taxon>
    </lineage>
</organism>
<feature type="signal peptide" evidence="3">
    <location>
        <begin position="1"/>
        <end position="21"/>
    </location>
</feature>
<feature type="chain" id="PRO_0000401303" description="G-type lectin S-receptor-like serine/threonine-protein kinase SD2-5">
    <location>
        <begin position="22"/>
        <end position="821"/>
    </location>
</feature>
<feature type="topological domain" description="Extracellular" evidence="3">
    <location>
        <begin position="22"/>
        <end position="429"/>
    </location>
</feature>
<feature type="transmembrane region" description="Helical" evidence="3">
    <location>
        <begin position="430"/>
        <end position="450"/>
    </location>
</feature>
<feature type="topological domain" description="Cytoplasmic" evidence="3">
    <location>
        <begin position="451"/>
        <end position="821"/>
    </location>
</feature>
<feature type="domain" description="Bulb-type lectin" evidence="4">
    <location>
        <begin position="33"/>
        <end position="148"/>
    </location>
</feature>
<feature type="domain" description="EGF-like; atypical">
    <location>
        <begin position="280"/>
        <end position="314"/>
    </location>
</feature>
<feature type="domain" description="PAN">
    <location>
        <begin position="323"/>
        <end position="411"/>
    </location>
</feature>
<feature type="domain" description="Protein kinase" evidence="5">
    <location>
        <begin position="493"/>
        <end position="768"/>
    </location>
</feature>
<feature type="region of interest" description="CaM-binding" evidence="1">
    <location>
        <begin position="581"/>
        <end position="599"/>
    </location>
</feature>
<feature type="active site" description="Proton acceptor" evidence="5 6">
    <location>
        <position position="618"/>
    </location>
</feature>
<feature type="binding site" evidence="5">
    <location>
        <begin position="499"/>
        <end position="507"/>
    </location>
    <ligand>
        <name>ATP</name>
        <dbReference type="ChEBI" id="CHEBI:30616"/>
    </ligand>
</feature>
<feature type="binding site" evidence="5">
    <location>
        <position position="521"/>
    </location>
    <ligand>
        <name>ATP</name>
        <dbReference type="ChEBI" id="CHEBI:30616"/>
    </ligand>
</feature>
<feature type="modified residue" description="Phosphoserine" evidence="2">
    <location>
        <position position="635"/>
    </location>
</feature>
<feature type="modified residue" description="Phosphothreonine" evidence="2">
    <location>
        <position position="652"/>
    </location>
</feature>
<feature type="glycosylation site" description="N-linked (GlcNAc...) asparagine" evidence="3">
    <location>
        <position position="51"/>
    </location>
</feature>
<feature type="glycosylation site" description="N-linked (GlcNAc...) asparagine" evidence="3">
    <location>
        <position position="121"/>
    </location>
</feature>
<feature type="glycosylation site" description="N-linked (GlcNAc...) asparagine" evidence="3">
    <location>
        <position position="174"/>
    </location>
</feature>
<feature type="glycosylation site" description="N-linked (GlcNAc...) asparagine" evidence="3">
    <location>
        <position position="248"/>
    </location>
</feature>
<feature type="glycosylation site" description="N-linked (GlcNAc...) asparagine" evidence="3">
    <location>
        <position position="329"/>
    </location>
</feature>
<feature type="glycosylation site" description="N-linked (GlcNAc...) asparagine" evidence="3">
    <location>
        <position position="370"/>
    </location>
</feature>
<feature type="glycosylation site" description="N-linked (GlcNAc...) asparagine" evidence="3">
    <location>
        <position position="380"/>
    </location>
</feature>
<feature type="disulfide bond" evidence="4">
    <location>
        <begin position="284"/>
        <end position="296"/>
    </location>
</feature>
<feature type="disulfide bond" evidence="4">
    <location>
        <begin position="290"/>
        <end position="302"/>
    </location>
</feature>
<feature type="disulfide bond" evidence="4">
    <location>
        <begin position="363"/>
        <end position="385"/>
    </location>
</feature>
<feature type="disulfide bond" evidence="4">
    <location>
        <begin position="367"/>
        <end position="373"/>
    </location>
</feature>
<comment type="catalytic activity">
    <reaction>
        <text>L-seryl-[protein] + ATP = O-phospho-L-seryl-[protein] + ADP + H(+)</text>
        <dbReference type="Rhea" id="RHEA:17989"/>
        <dbReference type="Rhea" id="RHEA-COMP:9863"/>
        <dbReference type="Rhea" id="RHEA-COMP:11604"/>
        <dbReference type="ChEBI" id="CHEBI:15378"/>
        <dbReference type="ChEBI" id="CHEBI:29999"/>
        <dbReference type="ChEBI" id="CHEBI:30616"/>
        <dbReference type="ChEBI" id="CHEBI:83421"/>
        <dbReference type="ChEBI" id="CHEBI:456216"/>
        <dbReference type="EC" id="2.7.11.1"/>
    </reaction>
</comment>
<comment type="catalytic activity">
    <reaction>
        <text>L-threonyl-[protein] + ATP = O-phospho-L-threonyl-[protein] + ADP + H(+)</text>
        <dbReference type="Rhea" id="RHEA:46608"/>
        <dbReference type="Rhea" id="RHEA-COMP:11060"/>
        <dbReference type="Rhea" id="RHEA-COMP:11605"/>
        <dbReference type="ChEBI" id="CHEBI:15378"/>
        <dbReference type="ChEBI" id="CHEBI:30013"/>
        <dbReference type="ChEBI" id="CHEBI:30616"/>
        <dbReference type="ChEBI" id="CHEBI:61977"/>
        <dbReference type="ChEBI" id="CHEBI:456216"/>
        <dbReference type="EC" id="2.7.11.1"/>
    </reaction>
</comment>
<comment type="subunit">
    <text evidence="7">Interacts with PUB9, PUB13, PUB14 and PUB29.</text>
</comment>
<comment type="subcellular location">
    <subcellularLocation>
        <location evidence="3">Membrane</location>
        <topology evidence="3">Single-pass type I membrane protein</topology>
    </subcellularLocation>
</comment>
<comment type="similarity">
    <text evidence="5">Belongs to the protein kinase superfamily. Ser/Thr protein kinase family.</text>
</comment>
<comment type="sequence caution" evidence="8">
    <conflict type="erroneous gene model prediction">
        <sequence resource="EMBL-CDS" id="CAA16960"/>
    </conflict>
</comment>
<comment type="sequence caution" evidence="8">
    <conflict type="erroneous gene model prediction">
        <sequence resource="EMBL-CDS" id="CAA22558"/>
    </conflict>
</comment>
<comment type="sequence caution" evidence="8">
    <conflict type="erroneous gene model prediction">
        <sequence resource="EMBL-CDS" id="CAB79948"/>
    </conflict>
</comment>
<keyword id="KW-0067">ATP-binding</keyword>
<keyword id="KW-1015">Disulfide bond</keyword>
<keyword id="KW-0245">EGF-like domain</keyword>
<keyword id="KW-0325">Glycoprotein</keyword>
<keyword id="KW-0418">Kinase</keyword>
<keyword id="KW-0430">Lectin</keyword>
<keyword id="KW-0472">Membrane</keyword>
<keyword id="KW-0547">Nucleotide-binding</keyword>
<keyword id="KW-0597">Phosphoprotein</keyword>
<keyword id="KW-0675">Receptor</keyword>
<keyword id="KW-1185">Reference proteome</keyword>
<keyword id="KW-0723">Serine/threonine-protein kinase</keyword>
<keyword id="KW-0732">Signal</keyword>
<keyword id="KW-0808">Transferase</keyword>
<keyword id="KW-0812">Transmembrane</keyword>
<keyword id="KW-1133">Transmembrane helix</keyword>
<reference key="1">
    <citation type="journal article" date="1999" name="Nature">
        <title>Sequence and analysis of chromosome 4 of the plant Arabidopsis thaliana.</title>
        <authorList>
            <person name="Mayer K.F.X."/>
            <person name="Schueller C."/>
            <person name="Wambutt R."/>
            <person name="Murphy G."/>
            <person name="Volckaert G."/>
            <person name="Pohl T."/>
            <person name="Duesterhoeft A."/>
            <person name="Stiekema W."/>
            <person name="Entian K.-D."/>
            <person name="Terryn N."/>
            <person name="Harris B."/>
            <person name="Ansorge W."/>
            <person name="Brandt P."/>
            <person name="Grivell L.A."/>
            <person name="Rieger M."/>
            <person name="Weichselgartner M."/>
            <person name="de Simone V."/>
            <person name="Obermaier B."/>
            <person name="Mache R."/>
            <person name="Mueller M."/>
            <person name="Kreis M."/>
            <person name="Delseny M."/>
            <person name="Puigdomenech P."/>
            <person name="Watson M."/>
            <person name="Schmidtheini T."/>
            <person name="Reichert B."/>
            <person name="Portetelle D."/>
            <person name="Perez-Alonso M."/>
            <person name="Boutry M."/>
            <person name="Bancroft I."/>
            <person name="Vos P."/>
            <person name="Hoheisel J."/>
            <person name="Zimmermann W."/>
            <person name="Wedler H."/>
            <person name="Ridley P."/>
            <person name="Langham S.-A."/>
            <person name="McCullagh B."/>
            <person name="Bilham L."/>
            <person name="Robben J."/>
            <person name="van der Schueren J."/>
            <person name="Grymonprez B."/>
            <person name="Chuang Y.-J."/>
            <person name="Vandenbussche F."/>
            <person name="Braeken M."/>
            <person name="Weltjens I."/>
            <person name="Voet M."/>
            <person name="Bastiaens I."/>
            <person name="Aert R."/>
            <person name="Defoor E."/>
            <person name="Weitzenegger T."/>
            <person name="Bothe G."/>
            <person name="Ramsperger U."/>
            <person name="Hilbert H."/>
            <person name="Braun M."/>
            <person name="Holzer E."/>
            <person name="Brandt A."/>
            <person name="Peters S."/>
            <person name="van Staveren M."/>
            <person name="Dirkse W."/>
            <person name="Mooijman P."/>
            <person name="Klein Lankhorst R."/>
            <person name="Rose M."/>
            <person name="Hauf J."/>
            <person name="Koetter P."/>
            <person name="Berneiser S."/>
            <person name="Hempel S."/>
            <person name="Feldpausch M."/>
            <person name="Lamberth S."/>
            <person name="Van den Daele H."/>
            <person name="De Keyser A."/>
            <person name="Buysshaert C."/>
            <person name="Gielen J."/>
            <person name="Villarroel R."/>
            <person name="De Clercq R."/>
            <person name="van Montagu M."/>
            <person name="Rogers J."/>
            <person name="Cronin A."/>
            <person name="Quail M.A."/>
            <person name="Bray-Allen S."/>
            <person name="Clark L."/>
            <person name="Doggett J."/>
            <person name="Hall S."/>
            <person name="Kay M."/>
            <person name="Lennard N."/>
            <person name="McLay K."/>
            <person name="Mayes R."/>
            <person name="Pettett A."/>
            <person name="Rajandream M.A."/>
            <person name="Lyne M."/>
            <person name="Benes V."/>
            <person name="Rechmann S."/>
            <person name="Borkova D."/>
            <person name="Bloecker H."/>
            <person name="Scharfe M."/>
            <person name="Grimm M."/>
            <person name="Loehnert T.-H."/>
            <person name="Dose S."/>
            <person name="de Haan M."/>
            <person name="Maarse A.C."/>
            <person name="Schaefer M."/>
            <person name="Mueller-Auer S."/>
            <person name="Gabel C."/>
            <person name="Fuchs M."/>
            <person name="Fartmann B."/>
            <person name="Granderath K."/>
            <person name="Dauner D."/>
            <person name="Herzl A."/>
            <person name="Neumann S."/>
            <person name="Argiriou A."/>
            <person name="Vitale D."/>
            <person name="Liguori R."/>
            <person name="Piravandi E."/>
            <person name="Massenet O."/>
            <person name="Quigley F."/>
            <person name="Clabauld G."/>
            <person name="Muendlein A."/>
            <person name="Felber R."/>
            <person name="Schnabl S."/>
            <person name="Hiller R."/>
            <person name="Schmidt W."/>
            <person name="Lecharny A."/>
            <person name="Aubourg S."/>
            <person name="Chefdor F."/>
            <person name="Cooke R."/>
            <person name="Berger C."/>
            <person name="Monfort A."/>
            <person name="Casacuberta E."/>
            <person name="Gibbons T."/>
            <person name="Weber N."/>
            <person name="Vandenbol M."/>
            <person name="Bargues M."/>
            <person name="Terol J."/>
            <person name="Torres A."/>
            <person name="Perez-Perez A."/>
            <person name="Purnelle B."/>
            <person name="Bent E."/>
            <person name="Johnson S."/>
            <person name="Tacon D."/>
            <person name="Jesse T."/>
            <person name="Heijnen L."/>
            <person name="Schwarz S."/>
            <person name="Scholler P."/>
            <person name="Heber S."/>
            <person name="Francs P."/>
            <person name="Bielke C."/>
            <person name="Frishman D."/>
            <person name="Haase D."/>
            <person name="Lemcke K."/>
            <person name="Mewes H.-W."/>
            <person name="Stocker S."/>
            <person name="Zaccaria P."/>
            <person name="Bevan M."/>
            <person name="Wilson R.K."/>
            <person name="de la Bastide M."/>
            <person name="Habermann K."/>
            <person name="Parnell L."/>
            <person name="Dedhia N."/>
            <person name="Gnoj L."/>
            <person name="Schutz K."/>
            <person name="Huang E."/>
            <person name="Spiegel L."/>
            <person name="Sekhon M."/>
            <person name="Murray J."/>
            <person name="Sheet P."/>
            <person name="Cordes M."/>
            <person name="Abu-Threideh J."/>
            <person name="Stoneking T."/>
            <person name="Kalicki J."/>
            <person name="Graves T."/>
            <person name="Harmon G."/>
            <person name="Edwards J."/>
            <person name="Latreille P."/>
            <person name="Courtney L."/>
            <person name="Cloud J."/>
            <person name="Abbott A."/>
            <person name="Scott K."/>
            <person name="Johnson D."/>
            <person name="Minx P."/>
            <person name="Bentley D."/>
            <person name="Fulton B."/>
            <person name="Miller N."/>
            <person name="Greco T."/>
            <person name="Kemp K."/>
            <person name="Kramer J."/>
            <person name="Fulton L."/>
            <person name="Mardis E."/>
            <person name="Dante M."/>
            <person name="Pepin K."/>
            <person name="Hillier L.W."/>
            <person name="Nelson J."/>
            <person name="Spieth J."/>
            <person name="Ryan E."/>
            <person name="Andrews S."/>
            <person name="Geisel C."/>
            <person name="Layman D."/>
            <person name="Du H."/>
            <person name="Ali J."/>
            <person name="Berghoff A."/>
            <person name="Jones K."/>
            <person name="Drone K."/>
            <person name="Cotton M."/>
            <person name="Joshu C."/>
            <person name="Antonoiu B."/>
            <person name="Zidanic M."/>
            <person name="Strong C."/>
            <person name="Sun H."/>
            <person name="Lamar B."/>
            <person name="Yordan C."/>
            <person name="Ma P."/>
            <person name="Zhong J."/>
            <person name="Preston R."/>
            <person name="Vil D."/>
            <person name="Shekher M."/>
            <person name="Matero A."/>
            <person name="Shah R."/>
            <person name="Swaby I.K."/>
            <person name="O'Shaughnessy A."/>
            <person name="Rodriguez M."/>
            <person name="Hoffman J."/>
            <person name="Till S."/>
            <person name="Granat S."/>
            <person name="Shohdy N."/>
            <person name="Hasegawa A."/>
            <person name="Hameed A."/>
            <person name="Lodhi M."/>
            <person name="Johnson A."/>
            <person name="Chen E."/>
            <person name="Marra M.A."/>
            <person name="Martienssen R."/>
            <person name="McCombie W.R."/>
        </authorList>
    </citation>
    <scope>NUCLEOTIDE SEQUENCE [LARGE SCALE GENOMIC DNA]</scope>
    <source>
        <strain>cv. Columbia</strain>
    </source>
</reference>
<reference key="2">
    <citation type="journal article" date="2017" name="Plant J.">
        <title>Araport11: a complete reannotation of the Arabidopsis thaliana reference genome.</title>
        <authorList>
            <person name="Cheng C.Y."/>
            <person name="Krishnakumar V."/>
            <person name="Chan A.P."/>
            <person name="Thibaud-Nissen F."/>
            <person name="Schobel S."/>
            <person name="Town C.D."/>
        </authorList>
    </citation>
    <scope>GENOME REANNOTATION</scope>
    <source>
        <strain>cv. Columbia</strain>
    </source>
</reference>
<reference key="3">
    <citation type="journal article" date="2003" name="Science">
        <title>Empirical analysis of transcriptional activity in the Arabidopsis genome.</title>
        <authorList>
            <person name="Yamada K."/>
            <person name="Lim J."/>
            <person name="Dale J.M."/>
            <person name="Chen H."/>
            <person name="Shinn P."/>
            <person name="Palm C.J."/>
            <person name="Southwick A.M."/>
            <person name="Wu H.C."/>
            <person name="Kim C.J."/>
            <person name="Nguyen M."/>
            <person name="Pham P.K."/>
            <person name="Cheuk R.F."/>
            <person name="Karlin-Newmann G."/>
            <person name="Liu S.X."/>
            <person name="Lam B."/>
            <person name="Sakano H."/>
            <person name="Wu T."/>
            <person name="Yu G."/>
            <person name="Miranda M."/>
            <person name="Quach H.L."/>
            <person name="Tripp M."/>
            <person name="Chang C.H."/>
            <person name="Lee J.M."/>
            <person name="Toriumi M.J."/>
            <person name="Chan M.M."/>
            <person name="Tang C.C."/>
            <person name="Onodera C.S."/>
            <person name="Deng J.M."/>
            <person name="Akiyama K."/>
            <person name="Ansari Y."/>
            <person name="Arakawa T."/>
            <person name="Banh J."/>
            <person name="Banno F."/>
            <person name="Bowser L."/>
            <person name="Brooks S.Y."/>
            <person name="Carninci P."/>
            <person name="Chao Q."/>
            <person name="Choy N."/>
            <person name="Enju A."/>
            <person name="Goldsmith A.D."/>
            <person name="Gurjal M."/>
            <person name="Hansen N.F."/>
            <person name="Hayashizaki Y."/>
            <person name="Johnson-Hopson C."/>
            <person name="Hsuan V.W."/>
            <person name="Iida K."/>
            <person name="Karnes M."/>
            <person name="Khan S."/>
            <person name="Koesema E."/>
            <person name="Ishida J."/>
            <person name="Jiang P.X."/>
            <person name="Jones T."/>
            <person name="Kawai J."/>
            <person name="Kamiya A."/>
            <person name="Meyers C."/>
            <person name="Nakajima M."/>
            <person name="Narusaka M."/>
            <person name="Seki M."/>
            <person name="Sakurai T."/>
            <person name="Satou M."/>
            <person name="Tamse R."/>
            <person name="Vaysberg M."/>
            <person name="Wallender E.K."/>
            <person name="Wong C."/>
            <person name="Yamamura Y."/>
            <person name="Yuan S."/>
            <person name="Shinozaki K."/>
            <person name="Davis R.W."/>
            <person name="Theologis A."/>
            <person name="Ecker J.R."/>
        </authorList>
    </citation>
    <scope>NUCLEOTIDE SEQUENCE [LARGE SCALE MRNA]</scope>
    <source>
        <strain>cv. Columbia</strain>
    </source>
</reference>
<reference key="4">
    <citation type="journal article" date="2008" name="Plant Physiol.">
        <title>Interactions between the S-domain receptor kinases and AtPUB-ARM E3 ubiquitin ligases suggest a conserved signaling pathway in Arabidopsis.</title>
        <authorList>
            <person name="Samuel M.A."/>
            <person name="Mudgil Y."/>
            <person name="Salt J.N."/>
            <person name="Delmas F."/>
            <person name="Ramachandran S."/>
            <person name="Chilelli A."/>
            <person name="Goring D.R."/>
        </authorList>
    </citation>
    <scope>GENE FAMILY</scope>
    <scope>NOMENCLATURE</scope>
    <scope>INTERACTION WITH PUB9; PUB13; PUB14 AND PUB29</scope>
</reference>
<gene>
    <name type="primary">SD25</name>
    <name type="ordered locus">At4g32300</name>
    <name type="ORF">F10M6.60</name>
    <name type="ORF">F8B4.10</name>
</gene>
<proteinExistence type="evidence at protein level"/>
<name>SD25_ARATH</name>
<protein>
    <recommendedName>
        <fullName>G-type lectin S-receptor-like serine/threonine-protein kinase SD2-5</fullName>
        <ecNumber>2.7.11.1</ecNumber>
    </recommendedName>
    <alternativeName>
        <fullName>S-domain-2 (SD2) receptor kinase 5</fullName>
        <shortName>SD2-5</shortName>
    </alternativeName>
</protein>
<sequence length="821" mass="89740">MRGVFIVIVTCLVFLPDPLRAGVASIGSITPGFGGSQMNYINNDGIFLESNNSAFGFGFVTTQDSVTLFTLSIIHKSSTKLIWSANRASPVSNSDKFVFDDNGNVVMEGTEVWRLDNSGKNASRIELRDSGNLVVVSVDGTSIWESFDHPTDTLITNQAFKEGMKLTSSPSSSNMTYALEIKSGDMVLSVNSLTPQVYWSMANARERIINKDGGVVTSSSLLGNSWRFFDQKQVLLWQFVFSDNKDDNTTWIAVLGNNGVISFSNLGSGASAADSSTKIPSDLCGTPEPCGPYYVCSGSKVCGCVSGLSRARSDCKTGITSPCKKTKDNATLPLQLVSAGDGVDYFALGYAPPFSKKTDLDSCKEFCHNNCSCLGLFFQNSSGNCFLFDYIGSFKTSGNGGSGFVSYIKIASTGSGGGDNGEDDGKHFPYVVIIVVVTVFIIAVLIFVAFRIHKRKKMILEAPQESSEEDNFLENLSGMPIRFAYKDLQSATNNFSVKLGQGGFGSVYEGTLPDGSRLAVKKLEGIGQGKKEFRAEVSIIGSIHHLHLVRLRGFCAEGAHRLLAYEFLSKGSLERWIFRKKDGDVLLDWDTRFNIALGTAKGLAYLHEDCDARIVHCDIKPENILLDDNFNAKVSDFGLAKLMTREQSHVFTTMRGTRGYLAPEWITNYAISEKSDVYSYGMVLLELIGGRKNYDPSETSEKCHFPSFAFKKMEEGKLMDIVDGKMKNVDVTDERVQRAMKTALWCIQEDMQTRPSMSKVVQMLEGVFPVVQPPSSSTMGSRLYSSFFKSISEDGGATTSSGPSDCNSENYLSAVRLSGPR</sequence>
<dbReference type="EC" id="2.7.11.1"/>
<dbReference type="EMBL" id="AL021811">
    <property type="protein sequence ID" value="CAA16960.1"/>
    <property type="status" value="ALT_SEQ"/>
    <property type="molecule type" value="Genomic_DNA"/>
</dbReference>
<dbReference type="EMBL" id="AL034567">
    <property type="protein sequence ID" value="CAA22558.1"/>
    <property type="status" value="ALT_SEQ"/>
    <property type="molecule type" value="Genomic_DNA"/>
</dbReference>
<dbReference type="EMBL" id="AL161581">
    <property type="protein sequence ID" value="CAB79948.1"/>
    <property type="status" value="ALT_SEQ"/>
    <property type="molecule type" value="Genomic_DNA"/>
</dbReference>
<dbReference type="EMBL" id="CP002687">
    <property type="protein sequence ID" value="AEE86038.1"/>
    <property type="molecule type" value="Genomic_DNA"/>
</dbReference>
<dbReference type="EMBL" id="AY091010">
    <property type="protein sequence ID" value="AAM14032.1"/>
    <property type="molecule type" value="mRNA"/>
</dbReference>
<dbReference type="EMBL" id="AY117229">
    <property type="protein sequence ID" value="AAM51304.1"/>
    <property type="molecule type" value="mRNA"/>
</dbReference>
<dbReference type="PIR" id="T05341">
    <property type="entry name" value="T05341"/>
</dbReference>
<dbReference type="RefSeq" id="NP_194957.2">
    <property type="nucleotide sequence ID" value="NM_119383.4"/>
</dbReference>
<dbReference type="SMR" id="Q8RWZ5"/>
<dbReference type="BioGRID" id="14651">
    <property type="interactions" value="1"/>
</dbReference>
<dbReference type="FunCoup" id="Q8RWZ5">
    <property type="interactions" value="888"/>
</dbReference>
<dbReference type="STRING" id="3702.Q8RWZ5"/>
<dbReference type="GlyCosmos" id="Q8RWZ5">
    <property type="glycosylation" value="7 sites, No reported glycans"/>
</dbReference>
<dbReference type="GlyGen" id="Q8RWZ5">
    <property type="glycosylation" value="7 sites"/>
</dbReference>
<dbReference type="iPTMnet" id="Q8RWZ5"/>
<dbReference type="SwissPalm" id="Q8RWZ5"/>
<dbReference type="PaxDb" id="3702-AT4G32300.1"/>
<dbReference type="ProteomicsDB" id="232890"/>
<dbReference type="EnsemblPlants" id="AT4G32300.1">
    <property type="protein sequence ID" value="AT4G32300.1"/>
    <property type="gene ID" value="AT4G32300"/>
</dbReference>
<dbReference type="GeneID" id="829365"/>
<dbReference type="Gramene" id="AT4G32300.1">
    <property type="protein sequence ID" value="AT4G32300.1"/>
    <property type="gene ID" value="AT4G32300"/>
</dbReference>
<dbReference type="KEGG" id="ath:AT4G32300"/>
<dbReference type="Araport" id="AT4G32300"/>
<dbReference type="TAIR" id="AT4G32300">
    <property type="gene designation" value="SD2-5"/>
</dbReference>
<dbReference type="eggNOG" id="ENOG502QUXB">
    <property type="taxonomic scope" value="Eukaryota"/>
</dbReference>
<dbReference type="HOGENOM" id="CLU_000288_116_2_1"/>
<dbReference type="InParanoid" id="Q8RWZ5"/>
<dbReference type="OMA" id="YIGFWIY"/>
<dbReference type="OrthoDB" id="1668230at2759"/>
<dbReference type="PhylomeDB" id="Q8RWZ5"/>
<dbReference type="PRO" id="PR:Q8RWZ5"/>
<dbReference type="Proteomes" id="UP000006548">
    <property type="component" value="Chromosome 4"/>
</dbReference>
<dbReference type="ExpressionAtlas" id="Q8RWZ5">
    <property type="expression patterns" value="baseline and differential"/>
</dbReference>
<dbReference type="GO" id="GO:0005886">
    <property type="term" value="C:plasma membrane"/>
    <property type="evidence" value="ECO:0007005"/>
    <property type="project" value="TAIR"/>
</dbReference>
<dbReference type="GO" id="GO:0005524">
    <property type="term" value="F:ATP binding"/>
    <property type="evidence" value="ECO:0007669"/>
    <property type="project" value="UniProtKB-KW"/>
</dbReference>
<dbReference type="GO" id="GO:0005516">
    <property type="term" value="F:calmodulin binding"/>
    <property type="evidence" value="ECO:0000250"/>
    <property type="project" value="UniProtKB"/>
</dbReference>
<dbReference type="GO" id="GO:0030246">
    <property type="term" value="F:carbohydrate binding"/>
    <property type="evidence" value="ECO:0007669"/>
    <property type="project" value="UniProtKB-KW"/>
</dbReference>
<dbReference type="GO" id="GO:0004672">
    <property type="term" value="F:protein kinase activity"/>
    <property type="evidence" value="ECO:0000314"/>
    <property type="project" value="TAIR"/>
</dbReference>
<dbReference type="GO" id="GO:0106310">
    <property type="term" value="F:protein serine kinase activity"/>
    <property type="evidence" value="ECO:0007669"/>
    <property type="project" value="RHEA"/>
</dbReference>
<dbReference type="GO" id="GO:0004674">
    <property type="term" value="F:protein serine/threonine kinase activity"/>
    <property type="evidence" value="ECO:0000250"/>
    <property type="project" value="UniProtKB"/>
</dbReference>
<dbReference type="GO" id="GO:0031625">
    <property type="term" value="F:ubiquitin protein ligase binding"/>
    <property type="evidence" value="ECO:0000353"/>
    <property type="project" value="UniProtKB"/>
</dbReference>
<dbReference type="GO" id="GO:0046777">
    <property type="term" value="P:protein autophosphorylation"/>
    <property type="evidence" value="ECO:0000314"/>
    <property type="project" value="TAIR"/>
</dbReference>
<dbReference type="CDD" id="cd00028">
    <property type="entry name" value="B_lectin"/>
    <property type="match status" value="1"/>
</dbReference>
<dbReference type="CDD" id="cd01098">
    <property type="entry name" value="PAN_AP_plant"/>
    <property type="match status" value="1"/>
</dbReference>
<dbReference type="CDD" id="cd14066">
    <property type="entry name" value="STKc_IRAK"/>
    <property type="match status" value="1"/>
</dbReference>
<dbReference type="FunFam" id="1.10.510.10:FF:000248">
    <property type="entry name" value="S-receptor-like kinase 5"/>
    <property type="match status" value="1"/>
</dbReference>
<dbReference type="FunFam" id="3.30.200.20:FF:000178">
    <property type="entry name" value="serine/threonine-protein kinase PBS1-like"/>
    <property type="match status" value="1"/>
</dbReference>
<dbReference type="Gene3D" id="2.90.10.30">
    <property type="match status" value="1"/>
</dbReference>
<dbReference type="Gene3D" id="3.30.200.20">
    <property type="entry name" value="Phosphorylase Kinase, domain 1"/>
    <property type="match status" value="1"/>
</dbReference>
<dbReference type="Gene3D" id="1.10.510.10">
    <property type="entry name" value="Transferase(Phosphotransferase) domain 1"/>
    <property type="match status" value="1"/>
</dbReference>
<dbReference type="InterPro" id="IPR001480">
    <property type="entry name" value="Bulb-type_lectin_dom"/>
</dbReference>
<dbReference type="InterPro" id="IPR036426">
    <property type="entry name" value="Bulb-type_lectin_dom_sf"/>
</dbReference>
<dbReference type="InterPro" id="IPR051343">
    <property type="entry name" value="G-type_lectin_kinases/EP1-like"/>
</dbReference>
<dbReference type="InterPro" id="IPR011009">
    <property type="entry name" value="Kinase-like_dom_sf"/>
</dbReference>
<dbReference type="InterPro" id="IPR000719">
    <property type="entry name" value="Prot_kinase_dom"/>
</dbReference>
<dbReference type="InterPro" id="IPR017441">
    <property type="entry name" value="Protein_kinase_ATP_BS"/>
</dbReference>
<dbReference type="InterPro" id="IPR008271">
    <property type="entry name" value="Ser/Thr_kinase_AS"/>
</dbReference>
<dbReference type="InterPro" id="IPR024171">
    <property type="entry name" value="SRK-like_kinase"/>
</dbReference>
<dbReference type="PANTHER" id="PTHR47976">
    <property type="entry name" value="G-TYPE LECTIN S-RECEPTOR-LIKE SERINE/THREONINE-PROTEIN KINASE SD2-5"/>
    <property type="match status" value="1"/>
</dbReference>
<dbReference type="PANTHER" id="PTHR47976:SF1">
    <property type="entry name" value="G-TYPE LECTIN S-RECEPTOR-LIKE SERINE_THREONINE-PROTEIN KINASE SD2-5"/>
    <property type="match status" value="1"/>
</dbReference>
<dbReference type="Pfam" id="PF01453">
    <property type="entry name" value="B_lectin"/>
    <property type="match status" value="1"/>
</dbReference>
<dbReference type="Pfam" id="PF00069">
    <property type="entry name" value="Pkinase"/>
    <property type="match status" value="1"/>
</dbReference>
<dbReference type="PIRSF" id="PIRSF000641">
    <property type="entry name" value="SRK"/>
    <property type="match status" value="1"/>
</dbReference>
<dbReference type="SMART" id="SM00108">
    <property type="entry name" value="B_lectin"/>
    <property type="match status" value="1"/>
</dbReference>
<dbReference type="SMART" id="SM00220">
    <property type="entry name" value="S_TKc"/>
    <property type="match status" value="1"/>
</dbReference>
<dbReference type="SUPFAM" id="SSF51110">
    <property type="entry name" value="alpha-D-mannose-specific plant lectins"/>
    <property type="match status" value="1"/>
</dbReference>
<dbReference type="SUPFAM" id="SSF56112">
    <property type="entry name" value="Protein kinase-like (PK-like)"/>
    <property type="match status" value="1"/>
</dbReference>
<dbReference type="PROSITE" id="PS50927">
    <property type="entry name" value="BULB_LECTIN"/>
    <property type="match status" value="1"/>
</dbReference>
<dbReference type="PROSITE" id="PS00107">
    <property type="entry name" value="PROTEIN_KINASE_ATP"/>
    <property type="match status" value="1"/>
</dbReference>
<dbReference type="PROSITE" id="PS50011">
    <property type="entry name" value="PROTEIN_KINASE_DOM"/>
    <property type="match status" value="1"/>
</dbReference>
<dbReference type="PROSITE" id="PS00108">
    <property type="entry name" value="PROTEIN_KINASE_ST"/>
    <property type="match status" value="1"/>
</dbReference>